<evidence type="ECO:0000255" key="1">
    <source>
        <dbReference type="HAMAP-Rule" id="MF_01361"/>
    </source>
</evidence>
<dbReference type="EMBL" id="AM260479">
    <property type="protein sequence ID" value="CAJ91308.1"/>
    <property type="molecule type" value="Genomic_DNA"/>
</dbReference>
<dbReference type="RefSeq" id="WP_010812883.1">
    <property type="nucleotide sequence ID" value="NZ_CP039287.1"/>
</dbReference>
<dbReference type="STRING" id="381666.H16_A0156"/>
<dbReference type="KEGG" id="reh:H16_A0156"/>
<dbReference type="eggNOG" id="COG5487">
    <property type="taxonomic scope" value="Bacteria"/>
</dbReference>
<dbReference type="HOGENOM" id="CLU_187346_0_1_4"/>
<dbReference type="Proteomes" id="UP000008210">
    <property type="component" value="Chromosome 1"/>
</dbReference>
<dbReference type="GO" id="GO:0005886">
    <property type="term" value="C:plasma membrane"/>
    <property type="evidence" value="ECO:0007669"/>
    <property type="project" value="UniProtKB-SubCell"/>
</dbReference>
<dbReference type="HAMAP" id="MF_01361">
    <property type="entry name" value="UPF0391"/>
    <property type="match status" value="1"/>
</dbReference>
<dbReference type="InterPro" id="IPR009760">
    <property type="entry name" value="DUF1328"/>
</dbReference>
<dbReference type="NCBIfam" id="NF010226">
    <property type="entry name" value="PRK13682.1-1"/>
    <property type="match status" value="1"/>
</dbReference>
<dbReference type="NCBIfam" id="NF010229">
    <property type="entry name" value="PRK13682.1-4"/>
    <property type="match status" value="1"/>
</dbReference>
<dbReference type="Pfam" id="PF07043">
    <property type="entry name" value="DUF1328"/>
    <property type="match status" value="1"/>
</dbReference>
<dbReference type="PIRSF" id="PIRSF036466">
    <property type="entry name" value="UCP036466"/>
    <property type="match status" value="1"/>
</dbReference>
<proteinExistence type="inferred from homology"/>
<accession>Q0KFB3</accession>
<keyword id="KW-1003">Cell membrane</keyword>
<keyword id="KW-0472">Membrane</keyword>
<keyword id="KW-1185">Reference proteome</keyword>
<keyword id="KW-0812">Transmembrane</keyword>
<keyword id="KW-1133">Transmembrane helix</keyword>
<reference key="1">
    <citation type="journal article" date="2006" name="Nat. Biotechnol.">
        <title>Genome sequence of the bioplastic-producing 'Knallgas' bacterium Ralstonia eutropha H16.</title>
        <authorList>
            <person name="Pohlmann A."/>
            <person name="Fricke W.F."/>
            <person name="Reinecke F."/>
            <person name="Kusian B."/>
            <person name="Liesegang H."/>
            <person name="Cramm R."/>
            <person name="Eitinger T."/>
            <person name="Ewering C."/>
            <person name="Poetter M."/>
            <person name="Schwartz E."/>
            <person name="Strittmatter A."/>
            <person name="Voss I."/>
            <person name="Gottschalk G."/>
            <person name="Steinbuechel A."/>
            <person name="Friedrich B."/>
            <person name="Bowien B."/>
        </authorList>
    </citation>
    <scope>NUCLEOTIDE SEQUENCE [LARGE SCALE GENOMIC DNA]</scope>
    <source>
        <strain>ATCC 17699 / DSM 428 / KCTC 22496 / NCIMB 10442 / H16 / Stanier 337</strain>
    </source>
</reference>
<comment type="subcellular location">
    <subcellularLocation>
        <location evidence="1">Cell membrane</location>
        <topology evidence="1">Multi-pass membrane protein</topology>
    </subcellularLocation>
</comment>
<comment type="similarity">
    <text evidence="1">Belongs to the UPF0391 family.</text>
</comment>
<protein>
    <recommendedName>
        <fullName evidence="1">UPF0391 membrane protein H16_A0156</fullName>
    </recommendedName>
</protein>
<gene>
    <name type="ordered locus">H16_A0156</name>
</gene>
<feature type="chain" id="PRO_0000298599" description="UPF0391 membrane protein H16_A0156">
    <location>
        <begin position="1"/>
        <end position="55"/>
    </location>
</feature>
<feature type="transmembrane region" description="Helical" evidence="1">
    <location>
        <begin position="5"/>
        <end position="25"/>
    </location>
</feature>
<feature type="transmembrane region" description="Helical" evidence="1">
    <location>
        <begin position="30"/>
        <end position="50"/>
    </location>
</feature>
<organism>
    <name type="scientific">Cupriavidus necator (strain ATCC 17699 / DSM 428 / KCTC 22496 / NCIMB 10442 / H16 / Stanier 337)</name>
    <name type="common">Ralstonia eutropha</name>
    <dbReference type="NCBI Taxonomy" id="381666"/>
    <lineage>
        <taxon>Bacteria</taxon>
        <taxon>Pseudomonadati</taxon>
        <taxon>Pseudomonadota</taxon>
        <taxon>Betaproteobacteria</taxon>
        <taxon>Burkholderiales</taxon>
        <taxon>Burkholderiaceae</taxon>
        <taxon>Cupriavidus</taxon>
    </lineage>
</organism>
<sequence>MLQYALVFFVIALIAAIFGFGGIAAGAVEIAKILFFIFLVVALVAAVMGLVRRGR</sequence>
<name>Y156_CUPNH</name>